<protein>
    <recommendedName>
        <fullName>Nuclear phosphoprotein UL3 homolog</fullName>
    </recommendedName>
    <alternativeName>
        <fullName>ORF60 protein</fullName>
    </alternativeName>
</protein>
<evidence type="ECO:0000250" key="1"/>
<evidence type="ECO:0000305" key="2"/>
<feature type="chain" id="PRO_0000115895" description="Nuclear phosphoprotein UL3 homolog">
    <location>
        <begin position="1"/>
        <end position="212"/>
    </location>
</feature>
<reference key="1">
    <citation type="journal article" date="1992" name="Virology">
        <title>The DNA sequence of equine herpesvirus-1.</title>
        <authorList>
            <person name="Telford E.A.R."/>
            <person name="Watson M.S."/>
            <person name="McBride K."/>
            <person name="Davison A.J."/>
        </authorList>
    </citation>
    <scope>NUCLEOTIDE SEQUENCE [LARGE SCALE GENOMIC DNA]</scope>
</reference>
<name>NP03_EHV1B</name>
<organismHost>
    <name type="scientific">Equus caballus</name>
    <name type="common">Horse</name>
    <dbReference type="NCBI Taxonomy" id="9796"/>
</organismHost>
<proteinExistence type="inferred from homology"/>
<dbReference type="EMBL" id="AY665713">
    <property type="protein sequence ID" value="AAT67317.1"/>
    <property type="molecule type" value="Genomic_DNA"/>
</dbReference>
<dbReference type="PIR" id="F36801">
    <property type="entry name" value="WZBEF2"/>
</dbReference>
<dbReference type="KEGG" id="vg:2948562"/>
<dbReference type="Proteomes" id="UP000001189">
    <property type="component" value="Segment"/>
</dbReference>
<dbReference type="GO" id="GO:0042025">
    <property type="term" value="C:host cell nucleus"/>
    <property type="evidence" value="ECO:0007669"/>
    <property type="project" value="UniProtKB-SubCell"/>
</dbReference>
<dbReference type="InterPro" id="IPR005035">
    <property type="entry name" value="Herpes_UL3"/>
</dbReference>
<dbReference type="Pfam" id="PF03369">
    <property type="entry name" value="Herpes_UL3"/>
    <property type="match status" value="1"/>
</dbReference>
<comment type="subcellular location">
    <subcellularLocation>
        <location evidence="1">Host nucleus</location>
    </subcellularLocation>
</comment>
<comment type="PTM">
    <text evidence="1">Phosphorylated.</text>
</comment>
<comment type="similarity">
    <text evidence="2">Belongs to the alphaherpesvirinae HHV-1 UL3 family.</text>
</comment>
<sequence>MESALTVLSGWGWPVEVVTGPVADHLTEMRPPAPTGTTCTTTSTPTPLCVPDLSVESIKGLAPDGENANYVGFDTMFMVSSIDELGRRQLTDTIRKDLRVTLAKFTIACTKTSSFSSASSTRRRKRHCPSSERVMRSNKSLQMFVLCRRAHAKQIRDQLQSVIQARKPRKYYTRSSDGRTHPVVPVYIYEFSAVDKVYLHRDNVIEADAQAK</sequence>
<organism>
    <name type="scientific">Equine herpesvirus 1 (strain Ab4p)</name>
    <name type="common">EHV-1</name>
    <name type="synonym">Equine abortion virus</name>
    <dbReference type="NCBI Taxonomy" id="31520"/>
    <lineage>
        <taxon>Viruses</taxon>
        <taxon>Duplodnaviria</taxon>
        <taxon>Heunggongvirae</taxon>
        <taxon>Peploviricota</taxon>
        <taxon>Herviviricetes</taxon>
        <taxon>Herpesvirales</taxon>
        <taxon>Orthoherpesviridae</taxon>
        <taxon>Alphaherpesvirinae</taxon>
        <taxon>Varicellovirus</taxon>
        <taxon>Varicellovirus equidalpha1</taxon>
        <taxon>Equid alphaherpesvirus 1</taxon>
    </lineage>
</organism>
<keyword id="KW-1048">Host nucleus</keyword>
<keyword id="KW-0597">Phosphoprotein</keyword>
<keyword id="KW-1185">Reference proteome</keyword>
<gene>
    <name type="ordered locus">60</name>
</gene>
<accession>P28942</accession>
<accession>Q6S6U4</accession>